<name>DTD_ACTP7</name>
<proteinExistence type="inferred from homology"/>
<accession>B3H319</accession>
<reference key="1">
    <citation type="submission" date="2008-06" db="EMBL/GenBank/DDBJ databases">
        <title>Genome and proteome analysis of A. pleuropneumoniae serotype 7.</title>
        <authorList>
            <person name="Linke B."/>
            <person name="Buettner F."/>
            <person name="Martinez-Arias R."/>
            <person name="Goesmann A."/>
            <person name="Baltes N."/>
            <person name="Tegetmeyer H."/>
            <person name="Singh M."/>
            <person name="Gerlach G.F."/>
        </authorList>
    </citation>
    <scope>NUCLEOTIDE SEQUENCE [LARGE SCALE GENOMIC DNA]</scope>
    <source>
        <strain>AP76</strain>
    </source>
</reference>
<feature type="chain" id="PRO_1000127484" description="D-aminoacyl-tRNA deacylase">
    <location>
        <begin position="1"/>
        <end position="144"/>
    </location>
</feature>
<feature type="short sequence motif" description="Gly-cisPro motif, important for rejection of L-amino acids" evidence="1">
    <location>
        <begin position="136"/>
        <end position="137"/>
    </location>
</feature>
<organism>
    <name type="scientific">Actinobacillus pleuropneumoniae serotype 7 (strain AP76)</name>
    <dbReference type="NCBI Taxonomy" id="537457"/>
    <lineage>
        <taxon>Bacteria</taxon>
        <taxon>Pseudomonadati</taxon>
        <taxon>Pseudomonadota</taxon>
        <taxon>Gammaproteobacteria</taxon>
        <taxon>Pasteurellales</taxon>
        <taxon>Pasteurellaceae</taxon>
        <taxon>Actinobacillus</taxon>
    </lineage>
</organism>
<keyword id="KW-0963">Cytoplasm</keyword>
<keyword id="KW-0378">Hydrolase</keyword>
<keyword id="KW-0694">RNA-binding</keyword>
<keyword id="KW-0820">tRNA-binding</keyword>
<evidence type="ECO:0000255" key="1">
    <source>
        <dbReference type="HAMAP-Rule" id="MF_00518"/>
    </source>
</evidence>
<gene>
    <name evidence="1" type="primary">dtd</name>
    <name type="ordered locus">APP7_2037</name>
</gene>
<dbReference type="EC" id="3.1.1.96" evidence="1"/>
<dbReference type="EMBL" id="CP001091">
    <property type="protein sequence ID" value="ACE62689.1"/>
    <property type="molecule type" value="Genomic_DNA"/>
</dbReference>
<dbReference type="RefSeq" id="WP_005602846.1">
    <property type="nucleotide sequence ID" value="NC_010939.1"/>
</dbReference>
<dbReference type="SMR" id="B3H319"/>
<dbReference type="KEGG" id="apa:APP7_2037"/>
<dbReference type="HOGENOM" id="CLU_076901_1_1_6"/>
<dbReference type="Proteomes" id="UP000001226">
    <property type="component" value="Chromosome"/>
</dbReference>
<dbReference type="GO" id="GO:0005737">
    <property type="term" value="C:cytoplasm"/>
    <property type="evidence" value="ECO:0007669"/>
    <property type="project" value="UniProtKB-SubCell"/>
</dbReference>
<dbReference type="GO" id="GO:0051500">
    <property type="term" value="F:D-tyrosyl-tRNA(Tyr) deacylase activity"/>
    <property type="evidence" value="ECO:0007669"/>
    <property type="project" value="TreeGrafter"/>
</dbReference>
<dbReference type="GO" id="GO:0106026">
    <property type="term" value="F:Gly-tRNA(Ala) deacylase activity"/>
    <property type="evidence" value="ECO:0007669"/>
    <property type="project" value="UniProtKB-UniRule"/>
</dbReference>
<dbReference type="GO" id="GO:0043908">
    <property type="term" value="F:Ser(Gly)-tRNA(Ala) hydrolase activity"/>
    <property type="evidence" value="ECO:0007669"/>
    <property type="project" value="UniProtKB-UniRule"/>
</dbReference>
<dbReference type="GO" id="GO:0000049">
    <property type="term" value="F:tRNA binding"/>
    <property type="evidence" value="ECO:0007669"/>
    <property type="project" value="UniProtKB-UniRule"/>
</dbReference>
<dbReference type="GO" id="GO:0019478">
    <property type="term" value="P:D-amino acid catabolic process"/>
    <property type="evidence" value="ECO:0007669"/>
    <property type="project" value="UniProtKB-UniRule"/>
</dbReference>
<dbReference type="CDD" id="cd00563">
    <property type="entry name" value="Dtyr_deacylase"/>
    <property type="match status" value="1"/>
</dbReference>
<dbReference type="FunFam" id="3.50.80.10:FF:000001">
    <property type="entry name" value="D-aminoacyl-tRNA deacylase"/>
    <property type="match status" value="1"/>
</dbReference>
<dbReference type="Gene3D" id="3.50.80.10">
    <property type="entry name" value="D-tyrosyl-tRNA(Tyr) deacylase"/>
    <property type="match status" value="1"/>
</dbReference>
<dbReference type="HAMAP" id="MF_00518">
    <property type="entry name" value="Deacylase_Dtd"/>
    <property type="match status" value="1"/>
</dbReference>
<dbReference type="InterPro" id="IPR003732">
    <property type="entry name" value="Daa-tRNA_deacyls_DTD"/>
</dbReference>
<dbReference type="InterPro" id="IPR023509">
    <property type="entry name" value="DTD-like_sf"/>
</dbReference>
<dbReference type="NCBIfam" id="TIGR00256">
    <property type="entry name" value="D-aminoacyl-tRNA deacylase"/>
    <property type="match status" value="1"/>
</dbReference>
<dbReference type="PANTHER" id="PTHR10472:SF5">
    <property type="entry name" value="D-AMINOACYL-TRNA DEACYLASE 1"/>
    <property type="match status" value="1"/>
</dbReference>
<dbReference type="PANTHER" id="PTHR10472">
    <property type="entry name" value="D-TYROSYL-TRNA TYR DEACYLASE"/>
    <property type="match status" value="1"/>
</dbReference>
<dbReference type="Pfam" id="PF02580">
    <property type="entry name" value="Tyr_Deacylase"/>
    <property type="match status" value="1"/>
</dbReference>
<dbReference type="SUPFAM" id="SSF69500">
    <property type="entry name" value="DTD-like"/>
    <property type="match status" value="1"/>
</dbReference>
<protein>
    <recommendedName>
        <fullName evidence="1">D-aminoacyl-tRNA deacylase</fullName>
        <shortName evidence="1">DTD</shortName>
        <ecNumber evidence="1">3.1.1.96</ecNumber>
    </recommendedName>
    <alternativeName>
        <fullName evidence="1">Gly-tRNA(Ala) deacylase</fullName>
    </alternativeName>
</protein>
<sequence length="144" mass="15862">MIGLIQRVKWAKVEVEGQTVGEITQGLLVLLGVEQGDDQAKADKLLEKVLNYRVFSDEQGKMNLNVQQAGGSLLVVSQFTLAADTNKGLRPSFSRGAAPQEANALYEYFHQQAARKIHTQTGQFAADMQVSLQNDGPVTFWLQI</sequence>
<comment type="function">
    <text evidence="1">An aminoacyl-tRNA editing enzyme that deacylates mischarged D-aminoacyl-tRNAs. Also deacylates mischarged glycyl-tRNA(Ala), protecting cells against glycine mischarging by AlaRS. Acts via tRNA-based rather than protein-based catalysis; rejects L-amino acids rather than detecting D-amino acids in the active site. By recycling D-aminoacyl-tRNA to D-amino acids and free tRNA molecules, this enzyme counteracts the toxicity associated with the formation of D-aminoacyl-tRNA entities in vivo and helps enforce protein L-homochirality.</text>
</comment>
<comment type="catalytic activity">
    <reaction evidence="1">
        <text>glycyl-tRNA(Ala) + H2O = tRNA(Ala) + glycine + H(+)</text>
        <dbReference type="Rhea" id="RHEA:53744"/>
        <dbReference type="Rhea" id="RHEA-COMP:9657"/>
        <dbReference type="Rhea" id="RHEA-COMP:13640"/>
        <dbReference type="ChEBI" id="CHEBI:15377"/>
        <dbReference type="ChEBI" id="CHEBI:15378"/>
        <dbReference type="ChEBI" id="CHEBI:57305"/>
        <dbReference type="ChEBI" id="CHEBI:78442"/>
        <dbReference type="ChEBI" id="CHEBI:78522"/>
        <dbReference type="EC" id="3.1.1.96"/>
    </reaction>
</comment>
<comment type="catalytic activity">
    <reaction evidence="1">
        <text>a D-aminoacyl-tRNA + H2O = a tRNA + a D-alpha-amino acid + H(+)</text>
        <dbReference type="Rhea" id="RHEA:13953"/>
        <dbReference type="Rhea" id="RHEA-COMP:10123"/>
        <dbReference type="Rhea" id="RHEA-COMP:10124"/>
        <dbReference type="ChEBI" id="CHEBI:15377"/>
        <dbReference type="ChEBI" id="CHEBI:15378"/>
        <dbReference type="ChEBI" id="CHEBI:59871"/>
        <dbReference type="ChEBI" id="CHEBI:78442"/>
        <dbReference type="ChEBI" id="CHEBI:79333"/>
        <dbReference type="EC" id="3.1.1.96"/>
    </reaction>
</comment>
<comment type="subunit">
    <text evidence="1">Homodimer.</text>
</comment>
<comment type="subcellular location">
    <subcellularLocation>
        <location evidence="1">Cytoplasm</location>
    </subcellularLocation>
</comment>
<comment type="domain">
    <text evidence="1">A Gly-cisPro motif from one monomer fits into the active site of the other monomer to allow specific chiral rejection of L-amino acids.</text>
</comment>
<comment type="similarity">
    <text evidence="1">Belongs to the DTD family.</text>
</comment>